<protein>
    <recommendedName>
        <fullName evidence="1">NAD-dependent malic enzyme</fullName>
        <shortName evidence="1">NAD-ME</shortName>
        <ecNumber evidence="1">1.1.1.38</ecNumber>
    </recommendedName>
</protein>
<sequence length="565" mass="63197">MEPKTKKQRSLYIPYAGPVLLEFPLLNKGSAFSMEERRNFNLLGLLPEVVETIEEQAERAWIQYQGFKTEIDKHIYLRNIQDTNETLFYRLVNNHLDEMMPVIYTPTVGAACERFSEIYRRSRGVFISYQNRHNMDDILQNVPNHNIKVIVVTDGERILGLGDQGIGGMGIPIGKLSLYTACGGISPAYTLPVVLDVGTNNQQLLNDPLYMGWRNPRITDDEYYEFVDEFIQAVKQRWPDVLLQFEDFAQKNAMPLLNRYRNEICSFNDDIQGTAAVTVGTLIAASRAAGGQLSEKKIVFLGAGSAGCGIAEMIISQTQREGLSEEAARQKVFMVDRFGLLTDKMPNLLPFQTKLVQKRENLSDWDTDSDVLSLLDVVRNVKPDILIGVSGQTGLFTEEIIREMHKHCPRPIVMPLSNPTSRVEATPQDIIAWTEGNALVATGSPFNPVVWKDKIYPIAQCNNAFIFPGIGLGVIASGASRITDEMLMSASETLAQYSPLVLNGEGMVLPELKDIQKVSRAIAFAVGKMAQQQGVAVKTSAEALQQAIDDNFWQAEYRDYRRTSI</sequence>
<gene>
    <name evidence="1" type="primary">maeA</name>
    <name type="ordered locus">ECDH10B_1610</name>
</gene>
<feature type="chain" id="PRO_1000185995" description="NAD-dependent malic enzyme">
    <location>
        <begin position="1"/>
        <end position="565"/>
    </location>
</feature>
<feature type="active site" description="Proton donor" evidence="1">
    <location>
        <position position="104"/>
    </location>
</feature>
<feature type="active site" description="Proton acceptor" evidence="1">
    <location>
        <position position="175"/>
    </location>
</feature>
<feature type="binding site" evidence="1">
    <location>
        <position position="157"/>
    </location>
    <ligand>
        <name>NAD(+)</name>
        <dbReference type="ChEBI" id="CHEBI:57540"/>
    </ligand>
</feature>
<feature type="binding site" evidence="1">
    <location>
        <position position="246"/>
    </location>
    <ligand>
        <name>a divalent metal cation</name>
        <dbReference type="ChEBI" id="CHEBI:60240"/>
    </ligand>
</feature>
<feature type="binding site" evidence="1">
    <location>
        <position position="247"/>
    </location>
    <ligand>
        <name>a divalent metal cation</name>
        <dbReference type="ChEBI" id="CHEBI:60240"/>
    </ligand>
</feature>
<feature type="binding site" evidence="1">
    <location>
        <position position="270"/>
    </location>
    <ligand>
        <name>a divalent metal cation</name>
        <dbReference type="ChEBI" id="CHEBI:60240"/>
    </ligand>
</feature>
<feature type="binding site" evidence="1">
    <location>
        <position position="270"/>
    </location>
    <ligand>
        <name>NAD(+)</name>
        <dbReference type="ChEBI" id="CHEBI:57540"/>
    </ligand>
</feature>
<feature type="binding site" evidence="1">
    <location>
        <position position="418"/>
    </location>
    <ligand>
        <name>NAD(+)</name>
        <dbReference type="ChEBI" id="CHEBI:57540"/>
    </ligand>
</feature>
<feature type="site" description="Important for activity" evidence="1">
    <location>
        <position position="270"/>
    </location>
</feature>
<organism>
    <name type="scientific">Escherichia coli (strain K12 / DH10B)</name>
    <dbReference type="NCBI Taxonomy" id="316385"/>
    <lineage>
        <taxon>Bacteria</taxon>
        <taxon>Pseudomonadati</taxon>
        <taxon>Pseudomonadota</taxon>
        <taxon>Gammaproteobacteria</taxon>
        <taxon>Enterobacterales</taxon>
        <taxon>Enterobacteriaceae</taxon>
        <taxon>Escherichia</taxon>
    </lineage>
</organism>
<dbReference type="EC" id="1.1.1.38" evidence="1"/>
<dbReference type="EMBL" id="CP000948">
    <property type="protein sequence ID" value="ACB02692.1"/>
    <property type="molecule type" value="Genomic_DNA"/>
</dbReference>
<dbReference type="RefSeq" id="WP_000433476.1">
    <property type="nucleotide sequence ID" value="NC_010473.1"/>
</dbReference>
<dbReference type="SMR" id="B1XE70"/>
<dbReference type="KEGG" id="ecd:ECDH10B_1610"/>
<dbReference type="HOGENOM" id="CLU_011405_5_2_6"/>
<dbReference type="GO" id="GO:0005829">
    <property type="term" value="C:cytosol"/>
    <property type="evidence" value="ECO:0007669"/>
    <property type="project" value="TreeGrafter"/>
</dbReference>
<dbReference type="GO" id="GO:0004471">
    <property type="term" value="F:malate dehydrogenase (decarboxylating) (NAD+) activity"/>
    <property type="evidence" value="ECO:0007669"/>
    <property type="project" value="UniProtKB-UniRule"/>
</dbReference>
<dbReference type="GO" id="GO:0046872">
    <property type="term" value="F:metal ion binding"/>
    <property type="evidence" value="ECO:0007669"/>
    <property type="project" value="UniProtKB-KW"/>
</dbReference>
<dbReference type="GO" id="GO:0051287">
    <property type="term" value="F:NAD binding"/>
    <property type="evidence" value="ECO:0007669"/>
    <property type="project" value="InterPro"/>
</dbReference>
<dbReference type="GO" id="GO:0008948">
    <property type="term" value="F:oxaloacetate decarboxylase activity"/>
    <property type="evidence" value="ECO:0007669"/>
    <property type="project" value="UniProtKB-UniRule"/>
</dbReference>
<dbReference type="GO" id="GO:0006108">
    <property type="term" value="P:malate metabolic process"/>
    <property type="evidence" value="ECO:0007669"/>
    <property type="project" value="TreeGrafter"/>
</dbReference>
<dbReference type="CDD" id="cd05312">
    <property type="entry name" value="NAD_bind_1_malic_enz"/>
    <property type="match status" value="1"/>
</dbReference>
<dbReference type="FunFam" id="3.40.50.10380:FF:000001">
    <property type="entry name" value="NAD-dependent malic enzyme"/>
    <property type="match status" value="1"/>
</dbReference>
<dbReference type="FunFam" id="3.40.50.720:FF:000055">
    <property type="entry name" value="NAD-dependent malic enzyme"/>
    <property type="match status" value="1"/>
</dbReference>
<dbReference type="Gene3D" id="3.40.50.10380">
    <property type="entry name" value="Malic enzyme, N-terminal domain"/>
    <property type="match status" value="1"/>
</dbReference>
<dbReference type="Gene3D" id="3.40.50.720">
    <property type="entry name" value="NAD(P)-binding Rossmann-like Domain"/>
    <property type="match status" value="1"/>
</dbReference>
<dbReference type="HAMAP" id="MF_01619">
    <property type="entry name" value="NAD_malic_enz"/>
    <property type="match status" value="1"/>
</dbReference>
<dbReference type="InterPro" id="IPR046346">
    <property type="entry name" value="Aminoacid_DH-like_N_sf"/>
</dbReference>
<dbReference type="InterPro" id="IPR015884">
    <property type="entry name" value="Malic_enzyme_CS"/>
</dbReference>
<dbReference type="InterPro" id="IPR012301">
    <property type="entry name" value="Malic_N_dom"/>
</dbReference>
<dbReference type="InterPro" id="IPR037062">
    <property type="entry name" value="Malic_N_dom_sf"/>
</dbReference>
<dbReference type="InterPro" id="IPR012302">
    <property type="entry name" value="Malic_NAD-bd"/>
</dbReference>
<dbReference type="InterPro" id="IPR001891">
    <property type="entry name" value="Malic_OxRdtase"/>
</dbReference>
<dbReference type="InterPro" id="IPR036291">
    <property type="entry name" value="NAD(P)-bd_dom_sf"/>
</dbReference>
<dbReference type="InterPro" id="IPR023667">
    <property type="entry name" value="NAD_malic_enz_proteobac"/>
</dbReference>
<dbReference type="NCBIfam" id="NF010052">
    <property type="entry name" value="PRK13529.1"/>
    <property type="match status" value="1"/>
</dbReference>
<dbReference type="PANTHER" id="PTHR23406">
    <property type="entry name" value="MALIC ENZYME-RELATED"/>
    <property type="match status" value="1"/>
</dbReference>
<dbReference type="PANTHER" id="PTHR23406:SF34">
    <property type="entry name" value="NAD-DEPENDENT MALIC ENZYME, MITOCHONDRIAL"/>
    <property type="match status" value="1"/>
</dbReference>
<dbReference type="Pfam" id="PF00390">
    <property type="entry name" value="malic"/>
    <property type="match status" value="1"/>
</dbReference>
<dbReference type="Pfam" id="PF03949">
    <property type="entry name" value="Malic_M"/>
    <property type="match status" value="1"/>
</dbReference>
<dbReference type="PIRSF" id="PIRSF000106">
    <property type="entry name" value="ME"/>
    <property type="match status" value="1"/>
</dbReference>
<dbReference type="PRINTS" id="PR00072">
    <property type="entry name" value="MALOXRDTASE"/>
</dbReference>
<dbReference type="SMART" id="SM01274">
    <property type="entry name" value="malic"/>
    <property type="match status" value="1"/>
</dbReference>
<dbReference type="SMART" id="SM00919">
    <property type="entry name" value="Malic_M"/>
    <property type="match status" value="1"/>
</dbReference>
<dbReference type="SUPFAM" id="SSF53223">
    <property type="entry name" value="Aminoacid dehydrogenase-like, N-terminal domain"/>
    <property type="match status" value="1"/>
</dbReference>
<dbReference type="SUPFAM" id="SSF51735">
    <property type="entry name" value="NAD(P)-binding Rossmann-fold domains"/>
    <property type="match status" value="1"/>
</dbReference>
<dbReference type="PROSITE" id="PS00331">
    <property type="entry name" value="MALIC_ENZYMES"/>
    <property type="match status" value="1"/>
</dbReference>
<name>MAO1_ECODH</name>
<reference key="1">
    <citation type="journal article" date="2008" name="J. Bacteriol.">
        <title>The complete genome sequence of Escherichia coli DH10B: insights into the biology of a laboratory workhorse.</title>
        <authorList>
            <person name="Durfee T."/>
            <person name="Nelson R."/>
            <person name="Baldwin S."/>
            <person name="Plunkett G. III"/>
            <person name="Burland V."/>
            <person name="Mau B."/>
            <person name="Petrosino J.F."/>
            <person name="Qin X."/>
            <person name="Muzny D.M."/>
            <person name="Ayele M."/>
            <person name="Gibbs R.A."/>
            <person name="Csorgo B."/>
            <person name="Posfai G."/>
            <person name="Weinstock G.M."/>
            <person name="Blattner F.R."/>
        </authorList>
    </citation>
    <scope>NUCLEOTIDE SEQUENCE [LARGE SCALE GENOMIC DNA]</scope>
    <source>
        <strain>K12 / DH10B</strain>
    </source>
</reference>
<accession>B1XE70</accession>
<proteinExistence type="inferred from homology"/>
<evidence type="ECO:0000255" key="1">
    <source>
        <dbReference type="HAMAP-Rule" id="MF_01619"/>
    </source>
</evidence>
<comment type="catalytic activity">
    <reaction evidence="1">
        <text>(S)-malate + NAD(+) = pyruvate + CO2 + NADH</text>
        <dbReference type="Rhea" id="RHEA:12653"/>
        <dbReference type="ChEBI" id="CHEBI:15361"/>
        <dbReference type="ChEBI" id="CHEBI:15589"/>
        <dbReference type="ChEBI" id="CHEBI:16526"/>
        <dbReference type="ChEBI" id="CHEBI:57540"/>
        <dbReference type="ChEBI" id="CHEBI:57945"/>
        <dbReference type="EC" id="1.1.1.38"/>
    </reaction>
</comment>
<comment type="catalytic activity">
    <reaction evidence="1">
        <text>oxaloacetate + H(+) = pyruvate + CO2</text>
        <dbReference type="Rhea" id="RHEA:15641"/>
        <dbReference type="ChEBI" id="CHEBI:15361"/>
        <dbReference type="ChEBI" id="CHEBI:15378"/>
        <dbReference type="ChEBI" id="CHEBI:16452"/>
        <dbReference type="ChEBI" id="CHEBI:16526"/>
        <dbReference type="EC" id="1.1.1.38"/>
    </reaction>
</comment>
<comment type="cofactor">
    <cofactor evidence="1">
        <name>Mg(2+)</name>
        <dbReference type="ChEBI" id="CHEBI:18420"/>
    </cofactor>
    <cofactor evidence="1">
        <name>Mn(2+)</name>
        <dbReference type="ChEBI" id="CHEBI:29035"/>
    </cofactor>
    <text evidence="1">Divalent metal cations. Prefers magnesium or manganese.</text>
</comment>
<comment type="subunit">
    <text evidence="1">Homotetramer.</text>
</comment>
<comment type="similarity">
    <text evidence="1">Belongs to the malic enzymes family.</text>
</comment>
<keyword id="KW-0479">Metal-binding</keyword>
<keyword id="KW-0520">NAD</keyword>
<keyword id="KW-0560">Oxidoreductase</keyword>